<sequence length="652" mass="75997">MSNSSIEKIDNKYNFKIEYKLINNKELLKSRLSEIPKSSGCYLFKDIDNNLLYIGKSKKLRSRVSSYFNNYSDLTPRLSLMVRQITEIEIIVTDSEYEALNLESNLIKTNKPYFNILLKDDKKYPYLCITWSEKYPRIFITRRRRNRNNLDRYYGPYVDVGLLRRTLFTIKKIFPLRQRPRPVYKDRTCLNYSIGRCPGVCQEVISSDDYKKIMQQVSMIFQGRNDDLEIFLQKKMLQFSNDLDYENAAKIRDQISGLKLLTESQKISIPDSSINRDIFGIVSEKNVASIQIFQMRSGKLIGRIGYSQKLNNEDENHILQKILEEHYMNVEAVEIPSEILIQYNLPKQATIEDWLTELRKKKVKILIPKRNKKHETVEMVLKNAKLELDRILNGIQDNESSIEDLAQILELSEQPKRIEGYDISHIQGSDPVASQVVFIDGIPSKQHYRKYKIKDPNVFVGHSDDFASIYEVIHRRFKKWSRFKKSGGDFSILNDKTNSKLDNELLSDWPDLIMIDGGKGQLNAAIKALNELNLEEEVTICSLAKKNEEIFIPGFTKSLDTDENQKGVLLLRRVRDEAHRFALSFHRDKRSKRMNRSQLSQISGLGPSRIRELLEYFKSIDAIRIASKEDLSKVKGLGKNSVNDIYEYFNEL</sequence>
<feature type="chain" id="PRO_0000264923" description="UvrABC system protein C">
    <location>
        <begin position="1"/>
        <end position="652"/>
    </location>
</feature>
<feature type="domain" description="GIY-YIG" evidence="1">
    <location>
        <begin position="37"/>
        <end position="116"/>
    </location>
</feature>
<feature type="domain" description="UVR" evidence="1">
    <location>
        <begin position="226"/>
        <end position="261"/>
    </location>
</feature>
<evidence type="ECO:0000255" key="1">
    <source>
        <dbReference type="HAMAP-Rule" id="MF_00203"/>
    </source>
</evidence>
<keyword id="KW-0963">Cytoplasm</keyword>
<keyword id="KW-0227">DNA damage</keyword>
<keyword id="KW-0228">DNA excision</keyword>
<keyword id="KW-0234">DNA repair</keyword>
<keyword id="KW-0267">Excision nuclease</keyword>
<keyword id="KW-0742">SOS response</keyword>
<comment type="function">
    <text evidence="1">The UvrABC repair system catalyzes the recognition and processing of DNA lesions. UvrC both incises the 5' and 3' sides of the lesion. The N-terminal half is responsible for the 3' incision and the C-terminal half is responsible for the 5' incision.</text>
</comment>
<comment type="subunit">
    <text evidence="1">Interacts with UvrB in an incision complex.</text>
</comment>
<comment type="subcellular location">
    <subcellularLocation>
        <location evidence="1">Cytoplasm</location>
    </subcellularLocation>
</comment>
<comment type="similarity">
    <text evidence="1">Belongs to the UvrC family.</text>
</comment>
<protein>
    <recommendedName>
        <fullName evidence="1">UvrABC system protein C</fullName>
        <shortName evidence="1">Protein UvrC</shortName>
    </recommendedName>
    <alternativeName>
        <fullName evidence="1">Excinuclease ABC subunit C</fullName>
    </alternativeName>
</protein>
<name>UVRC_PROM9</name>
<gene>
    <name evidence="1" type="primary">uvrC</name>
    <name type="ordered locus">PMT9312_0918</name>
</gene>
<organism>
    <name type="scientific">Prochlorococcus marinus (strain MIT 9312)</name>
    <dbReference type="NCBI Taxonomy" id="74546"/>
    <lineage>
        <taxon>Bacteria</taxon>
        <taxon>Bacillati</taxon>
        <taxon>Cyanobacteriota</taxon>
        <taxon>Cyanophyceae</taxon>
        <taxon>Synechococcales</taxon>
        <taxon>Prochlorococcaceae</taxon>
        <taxon>Prochlorococcus</taxon>
    </lineage>
</organism>
<accession>Q31AW7</accession>
<dbReference type="EMBL" id="CP000111">
    <property type="protein sequence ID" value="ABB49978.1"/>
    <property type="molecule type" value="Genomic_DNA"/>
</dbReference>
<dbReference type="RefSeq" id="WP_011376472.1">
    <property type="nucleotide sequence ID" value="NC_007577.1"/>
</dbReference>
<dbReference type="SMR" id="Q31AW7"/>
<dbReference type="STRING" id="74546.PMT9312_0918"/>
<dbReference type="KEGG" id="pmi:PMT9312_0918"/>
<dbReference type="eggNOG" id="COG0322">
    <property type="taxonomic scope" value="Bacteria"/>
</dbReference>
<dbReference type="HOGENOM" id="CLU_014841_3_2_3"/>
<dbReference type="OrthoDB" id="9804933at2"/>
<dbReference type="Proteomes" id="UP000002715">
    <property type="component" value="Chromosome"/>
</dbReference>
<dbReference type="GO" id="GO:0005737">
    <property type="term" value="C:cytoplasm"/>
    <property type="evidence" value="ECO:0007669"/>
    <property type="project" value="UniProtKB-SubCell"/>
</dbReference>
<dbReference type="GO" id="GO:0009380">
    <property type="term" value="C:excinuclease repair complex"/>
    <property type="evidence" value="ECO:0007669"/>
    <property type="project" value="InterPro"/>
</dbReference>
<dbReference type="GO" id="GO:0003677">
    <property type="term" value="F:DNA binding"/>
    <property type="evidence" value="ECO:0007669"/>
    <property type="project" value="UniProtKB-UniRule"/>
</dbReference>
<dbReference type="GO" id="GO:0009381">
    <property type="term" value="F:excinuclease ABC activity"/>
    <property type="evidence" value="ECO:0007669"/>
    <property type="project" value="UniProtKB-UniRule"/>
</dbReference>
<dbReference type="GO" id="GO:0006289">
    <property type="term" value="P:nucleotide-excision repair"/>
    <property type="evidence" value="ECO:0007669"/>
    <property type="project" value="UniProtKB-UniRule"/>
</dbReference>
<dbReference type="GO" id="GO:0009432">
    <property type="term" value="P:SOS response"/>
    <property type="evidence" value="ECO:0007669"/>
    <property type="project" value="UniProtKB-UniRule"/>
</dbReference>
<dbReference type="CDD" id="cd10434">
    <property type="entry name" value="GIY-YIG_UvrC_Cho"/>
    <property type="match status" value="1"/>
</dbReference>
<dbReference type="FunFam" id="3.40.1440.10:FF:000001">
    <property type="entry name" value="UvrABC system protein C"/>
    <property type="match status" value="1"/>
</dbReference>
<dbReference type="Gene3D" id="1.10.150.20">
    <property type="entry name" value="5' to 3' exonuclease, C-terminal subdomain"/>
    <property type="match status" value="1"/>
</dbReference>
<dbReference type="Gene3D" id="3.40.1440.10">
    <property type="entry name" value="GIY-YIG endonuclease"/>
    <property type="match status" value="1"/>
</dbReference>
<dbReference type="Gene3D" id="4.10.860.10">
    <property type="entry name" value="UVR domain"/>
    <property type="match status" value="1"/>
</dbReference>
<dbReference type="Gene3D" id="3.30.420.340">
    <property type="entry name" value="UvrC, RNAse H endonuclease domain"/>
    <property type="match status" value="1"/>
</dbReference>
<dbReference type="HAMAP" id="MF_00203">
    <property type="entry name" value="UvrC"/>
    <property type="match status" value="1"/>
</dbReference>
<dbReference type="InterPro" id="IPR000305">
    <property type="entry name" value="GIY-YIG_endonuc"/>
</dbReference>
<dbReference type="InterPro" id="IPR035901">
    <property type="entry name" value="GIY-YIG_endonuc_sf"/>
</dbReference>
<dbReference type="InterPro" id="IPR047296">
    <property type="entry name" value="GIY-YIG_UvrC_Cho"/>
</dbReference>
<dbReference type="InterPro" id="IPR003583">
    <property type="entry name" value="Hlx-hairpin-Hlx_DNA-bd_motif"/>
</dbReference>
<dbReference type="InterPro" id="IPR010994">
    <property type="entry name" value="RuvA_2-like"/>
</dbReference>
<dbReference type="InterPro" id="IPR001943">
    <property type="entry name" value="UVR_dom"/>
</dbReference>
<dbReference type="InterPro" id="IPR036876">
    <property type="entry name" value="UVR_dom_sf"/>
</dbReference>
<dbReference type="InterPro" id="IPR050066">
    <property type="entry name" value="UvrABC_protein_C"/>
</dbReference>
<dbReference type="InterPro" id="IPR004791">
    <property type="entry name" value="UvrC"/>
</dbReference>
<dbReference type="InterPro" id="IPR001162">
    <property type="entry name" value="UvrC_RNase_H_dom"/>
</dbReference>
<dbReference type="InterPro" id="IPR038476">
    <property type="entry name" value="UvrC_RNase_H_dom_sf"/>
</dbReference>
<dbReference type="NCBIfam" id="NF001824">
    <property type="entry name" value="PRK00558.1-5"/>
    <property type="match status" value="1"/>
</dbReference>
<dbReference type="NCBIfam" id="TIGR00194">
    <property type="entry name" value="uvrC"/>
    <property type="match status" value="1"/>
</dbReference>
<dbReference type="PANTHER" id="PTHR30562:SF1">
    <property type="entry name" value="UVRABC SYSTEM PROTEIN C"/>
    <property type="match status" value="1"/>
</dbReference>
<dbReference type="PANTHER" id="PTHR30562">
    <property type="entry name" value="UVRC/OXIDOREDUCTASE"/>
    <property type="match status" value="1"/>
</dbReference>
<dbReference type="Pfam" id="PF01541">
    <property type="entry name" value="GIY-YIG"/>
    <property type="match status" value="1"/>
</dbReference>
<dbReference type="Pfam" id="PF14520">
    <property type="entry name" value="HHH_5"/>
    <property type="match status" value="1"/>
</dbReference>
<dbReference type="Pfam" id="PF02151">
    <property type="entry name" value="UVR"/>
    <property type="match status" value="1"/>
</dbReference>
<dbReference type="Pfam" id="PF22920">
    <property type="entry name" value="UvrC_RNaseH"/>
    <property type="match status" value="1"/>
</dbReference>
<dbReference type="Pfam" id="PF08459">
    <property type="entry name" value="UvrC_RNaseH_dom"/>
    <property type="match status" value="1"/>
</dbReference>
<dbReference type="SMART" id="SM00465">
    <property type="entry name" value="GIYc"/>
    <property type="match status" value="1"/>
</dbReference>
<dbReference type="SMART" id="SM00278">
    <property type="entry name" value="HhH1"/>
    <property type="match status" value="2"/>
</dbReference>
<dbReference type="SUPFAM" id="SSF46600">
    <property type="entry name" value="C-terminal UvrC-binding domain of UvrB"/>
    <property type="match status" value="1"/>
</dbReference>
<dbReference type="SUPFAM" id="SSF82771">
    <property type="entry name" value="GIY-YIG endonuclease"/>
    <property type="match status" value="1"/>
</dbReference>
<dbReference type="SUPFAM" id="SSF47781">
    <property type="entry name" value="RuvA domain 2-like"/>
    <property type="match status" value="1"/>
</dbReference>
<dbReference type="PROSITE" id="PS50164">
    <property type="entry name" value="GIY_YIG"/>
    <property type="match status" value="1"/>
</dbReference>
<dbReference type="PROSITE" id="PS50151">
    <property type="entry name" value="UVR"/>
    <property type="match status" value="1"/>
</dbReference>
<dbReference type="PROSITE" id="PS50165">
    <property type="entry name" value="UVRC"/>
    <property type="match status" value="1"/>
</dbReference>
<proteinExistence type="inferred from homology"/>
<reference key="1">
    <citation type="journal article" date="2006" name="Science">
        <title>Genomic islands and the ecology and evolution of Prochlorococcus.</title>
        <authorList>
            <person name="Coleman M.L."/>
            <person name="Sullivan M.B."/>
            <person name="Martiny A.C."/>
            <person name="Steglich C."/>
            <person name="Barry K."/>
            <person name="Delong E.F."/>
            <person name="Chisholm S.W."/>
        </authorList>
    </citation>
    <scope>NUCLEOTIDE SEQUENCE [LARGE SCALE GENOMIC DNA]</scope>
    <source>
        <strain>MIT 9312</strain>
    </source>
</reference>